<sequence length="1502" mass="164198">MSESAKAAAQNGQAEEQQLQQQLDEQQQLEEQQQLPPVTIRIPSPTCSRTVPKPKDSTEPLDRITLYPQPQETIQDIKLLINDWVGAYWLGPYSLQLPFVKGEDGRGKIYSKKKDFSEVRAGEKLNEWLEVQDAFEHLQEGEERVLEAVREPYGELSARQSIIRLLELIAPSGTTANTTSNPLGLQAGSTIFEQVRDGLVSANAETTYEEVEVSLPSGRKGKGGKKELVKVKRSVSGDKAHAFADWKGWAPASFGSLAVSSDPVEVAPSLKSIQISHFNPPPPHLRQKGHELYLQVSLLEGEVVTLICSTRGWYVSKSNVNNFDPSPRPSADGSIPAPTHSLIDLLHSISPLFSERVSRLPPISLDGALADPISTVAIPQATPAYPFLTSPPKPAISPEILRTQLAFLHTGAYGPDLVDAARDWNEEIQGIRELPRGTMQERVFREKMLQKVWAEFDQAAARAVQAVSKGDIPPINPAEDPKAHMYLQSNIFITQGDSDALDTYAHLGGDAAMRISHGKDAAGVKLLNKIDADGLYLLGHTIVDWQGRRWICQSILPGIFSNRRAVEEEKAQAETEAEAETADAVEGEQKKEDWVDVEKPTEKSGSETESDNPMMIYGLDSERPTSVHWDAATHSLLSTIATPLRLAAHTIKDGEGKEHEFYASAEVKGLKGQDGRRYLLDAQRLAPVDVEWLEKDITGPLVGPKKDDESAEEGVQYPHRLVMLRPELIEQFWESELKRWARGVAEKAQAKKAEAEAEAAAAADAEGEKKKEGEQSEIPQEEQSAAASAAAARRAEEDRPVDASLIGDIKQFNLSFNPDAFVEQPVLEAEGQEGKTEIKAAITDESDPSVKAVRDAGLFLRQIAIPAVVLDVLTGNTSGVMDGESLSKHLHQRGVNIRYLGHLASTIIQFSTSKDGAAKEPSGHLAALQSIVLQEMVFRAAKHILRELLYPLQPETATDAVSHFLNCLLGSCLNPAPVASYTPIGINSNEPEPAYVKLTPECLRAQIIKEVKSRFRWTLDESFLESGLRKKQLLRELASRVGFQLAQREYVFSKDQEEEENKREENIKSKEKKKGSKAGAKGETVKRTTTFEGEDVLTLVPVIKSTAPSVSVAEEILEAGRNTINRGKIEFGLDFMLEAIQLYESIHSVIHPEVASVYNSYAQAIHQIARLKIQQIAAQENPDPEQPLGVDISGALRFQRQAVAIAERTLGVYHHETAGYYFQLAMLENLEGNAQQSLRYFRHLLTLWDVIYGPGHPEISTILSNAGIVLQSMNDLSLSLSLQKQAYESTLACFGPNHIQTGQSLHQLVQGHFLAGDMASALETAKQALEIFKARLGEEHNQTKEEAKNVELLTAVIENQERQKEREEAVKKEATERLKMARERIGGGAASTSRPTGIRRLGGAGAGALPQGVRVVDPQTLAALAAAAGQGGNPSANAAAATAGQGEQANGESTGTPQIGERGTESLEELVRYIQGSAPGVGGSAKRGKNALRGKRRTGAKR</sequence>
<organism>
    <name type="scientific">Cryptococcus neoformans var. neoformans serotype D (strain JEC21 / ATCC MYA-565)</name>
    <name type="common">Filobasidiella neoformans</name>
    <dbReference type="NCBI Taxonomy" id="214684"/>
    <lineage>
        <taxon>Eukaryota</taxon>
        <taxon>Fungi</taxon>
        <taxon>Dikarya</taxon>
        <taxon>Basidiomycota</taxon>
        <taxon>Agaricomycotina</taxon>
        <taxon>Tremellomycetes</taxon>
        <taxon>Tremellales</taxon>
        <taxon>Cryptococcaceae</taxon>
        <taxon>Cryptococcus</taxon>
        <taxon>Cryptococcus neoformans species complex</taxon>
    </lineage>
</organism>
<name>CLU_CRYNJ</name>
<comment type="function">
    <text evidence="1">mRNA-binding protein involved in proper cytoplasmic distribution of mitochondria.</text>
</comment>
<comment type="subunit">
    <text evidence="1">May associate with the eukaryotic translation initiation factor 3 (eIF-3) complex.</text>
</comment>
<comment type="subcellular location">
    <subcellularLocation>
        <location evidence="1">Cytoplasm</location>
    </subcellularLocation>
</comment>
<comment type="similarity">
    <text evidence="1">Belongs to the CLU family.</text>
</comment>
<accession>P0CR86</accession>
<accession>Q55HY4</accession>
<accession>Q5K7G8</accession>
<gene>
    <name evidence="1" type="primary">CLU1</name>
    <name evidence="1" type="synonym">TIF31</name>
    <name type="ordered locus">CNM02490</name>
</gene>
<keyword id="KW-0963">Cytoplasm</keyword>
<keyword id="KW-1185">Reference proteome</keyword>
<feature type="chain" id="PRO_0000366403" description="Clustered mitochondria protein homolog">
    <location>
        <begin position="1"/>
        <end position="1502"/>
    </location>
</feature>
<feature type="domain" description="Clu" evidence="2">
    <location>
        <begin position="399"/>
        <end position="693"/>
    </location>
</feature>
<feature type="region of interest" description="Disordered" evidence="3">
    <location>
        <begin position="1"/>
        <end position="62"/>
    </location>
</feature>
<feature type="region of interest" description="Disordered" evidence="3">
    <location>
        <begin position="571"/>
        <end position="615"/>
    </location>
</feature>
<feature type="region of interest" description="Disordered" evidence="3">
    <location>
        <begin position="755"/>
        <end position="799"/>
    </location>
</feature>
<feature type="region of interest" description="Disordered" evidence="3">
    <location>
        <begin position="1054"/>
        <end position="1085"/>
    </location>
</feature>
<feature type="region of interest" description="Disordered" evidence="3">
    <location>
        <begin position="1381"/>
        <end position="1403"/>
    </location>
</feature>
<feature type="region of interest" description="Disordered" evidence="3">
    <location>
        <begin position="1429"/>
        <end position="1502"/>
    </location>
</feature>
<feature type="compositionally biased region" description="Low complexity" evidence="3">
    <location>
        <begin position="7"/>
        <end position="35"/>
    </location>
</feature>
<feature type="compositionally biased region" description="Basic and acidic residues" evidence="3">
    <location>
        <begin position="53"/>
        <end position="62"/>
    </location>
</feature>
<feature type="compositionally biased region" description="Acidic residues" evidence="3">
    <location>
        <begin position="575"/>
        <end position="586"/>
    </location>
</feature>
<feature type="compositionally biased region" description="Basic and acidic residues" evidence="3">
    <location>
        <begin position="587"/>
        <end position="606"/>
    </location>
</feature>
<feature type="compositionally biased region" description="Low complexity" evidence="3">
    <location>
        <begin position="781"/>
        <end position="792"/>
    </location>
</feature>
<feature type="compositionally biased region" description="Basic and acidic residues" evidence="3">
    <location>
        <begin position="1054"/>
        <end position="1069"/>
    </location>
</feature>
<feature type="compositionally biased region" description="Low complexity" evidence="3">
    <location>
        <begin position="1429"/>
        <end position="1451"/>
    </location>
</feature>
<feature type="compositionally biased region" description="Basic and acidic residues" evidence="3">
    <location>
        <begin position="1462"/>
        <end position="1471"/>
    </location>
</feature>
<feature type="compositionally biased region" description="Basic residues" evidence="3">
    <location>
        <begin position="1486"/>
        <end position="1502"/>
    </location>
</feature>
<evidence type="ECO:0000255" key="1">
    <source>
        <dbReference type="HAMAP-Rule" id="MF_03013"/>
    </source>
</evidence>
<evidence type="ECO:0000255" key="2">
    <source>
        <dbReference type="PROSITE-ProRule" id="PRU01167"/>
    </source>
</evidence>
<evidence type="ECO:0000256" key="3">
    <source>
        <dbReference type="SAM" id="MobiDB-lite"/>
    </source>
</evidence>
<protein>
    <recommendedName>
        <fullName evidence="1">Clustered mitochondria protein homolog</fullName>
    </recommendedName>
    <alternativeName>
        <fullName evidence="1">Protein TIF31 homolog</fullName>
    </alternativeName>
</protein>
<proteinExistence type="inferred from homology"/>
<dbReference type="EMBL" id="AE017353">
    <property type="protein sequence ID" value="AAW46737.1"/>
    <property type="molecule type" value="Genomic_DNA"/>
</dbReference>
<dbReference type="RefSeq" id="XP_568254.1">
    <property type="nucleotide sequence ID" value="XM_568254.1"/>
</dbReference>
<dbReference type="SMR" id="P0CR86"/>
<dbReference type="FunCoup" id="P0CR86">
    <property type="interactions" value="454"/>
</dbReference>
<dbReference type="STRING" id="214684.P0CR86"/>
<dbReference type="PaxDb" id="214684-P0CR86"/>
<dbReference type="EnsemblFungi" id="AAW46737">
    <property type="protein sequence ID" value="AAW46737"/>
    <property type="gene ID" value="CNM02490"/>
</dbReference>
<dbReference type="GeneID" id="3255204"/>
<dbReference type="KEGG" id="cne:CNM02490"/>
<dbReference type="VEuPathDB" id="FungiDB:CNM02490"/>
<dbReference type="eggNOG" id="KOG1839">
    <property type="taxonomic scope" value="Eukaryota"/>
</dbReference>
<dbReference type="HOGENOM" id="CLU_003256_2_0_1"/>
<dbReference type="InParanoid" id="P0CR86"/>
<dbReference type="OMA" id="DMAQCMR"/>
<dbReference type="OrthoDB" id="771227at2759"/>
<dbReference type="Proteomes" id="UP000002149">
    <property type="component" value="Chromosome 13"/>
</dbReference>
<dbReference type="GO" id="GO:0005737">
    <property type="term" value="C:cytoplasm"/>
    <property type="evidence" value="ECO:0000318"/>
    <property type="project" value="GO_Central"/>
</dbReference>
<dbReference type="GO" id="GO:0003729">
    <property type="term" value="F:mRNA binding"/>
    <property type="evidence" value="ECO:0000318"/>
    <property type="project" value="GO_Central"/>
</dbReference>
<dbReference type="GO" id="GO:0048312">
    <property type="term" value="P:intracellular distribution of mitochondria"/>
    <property type="evidence" value="ECO:0000318"/>
    <property type="project" value="GO_Central"/>
</dbReference>
<dbReference type="GO" id="GO:0007005">
    <property type="term" value="P:mitochondrion organization"/>
    <property type="evidence" value="ECO:0007669"/>
    <property type="project" value="UniProtKB-UniRule"/>
</dbReference>
<dbReference type="CDD" id="cd15466">
    <property type="entry name" value="CLU-central"/>
    <property type="match status" value="1"/>
</dbReference>
<dbReference type="Gene3D" id="3.30.2280.10">
    <property type="entry name" value="Hypothetical protein (hspc210)"/>
    <property type="match status" value="1"/>
</dbReference>
<dbReference type="Gene3D" id="1.25.40.10">
    <property type="entry name" value="Tetratricopeptide repeat domain"/>
    <property type="match status" value="2"/>
</dbReference>
<dbReference type="HAMAP" id="MF_03013">
    <property type="entry name" value="CLU"/>
    <property type="match status" value="1"/>
</dbReference>
<dbReference type="InterPro" id="IPR033646">
    <property type="entry name" value="CLU-central"/>
</dbReference>
<dbReference type="InterPro" id="IPR025697">
    <property type="entry name" value="CLU_dom"/>
</dbReference>
<dbReference type="InterPro" id="IPR027523">
    <property type="entry name" value="CLU_prot"/>
</dbReference>
<dbReference type="InterPro" id="IPR023231">
    <property type="entry name" value="GSKIP_dom_sf"/>
</dbReference>
<dbReference type="InterPro" id="IPR011990">
    <property type="entry name" value="TPR-like_helical_dom_sf"/>
</dbReference>
<dbReference type="PANTHER" id="PTHR12601:SF6">
    <property type="entry name" value="CLUSTERED MITOCHONDRIA PROTEIN HOMOLOG"/>
    <property type="match status" value="1"/>
</dbReference>
<dbReference type="PANTHER" id="PTHR12601">
    <property type="entry name" value="EUKARYOTIC TRANSLATION INITIATION FACTOR 3 SUBUNIT EIF-3"/>
    <property type="match status" value="1"/>
</dbReference>
<dbReference type="Pfam" id="PF13236">
    <property type="entry name" value="CLU"/>
    <property type="match status" value="1"/>
</dbReference>
<dbReference type="Pfam" id="PF12807">
    <property type="entry name" value="eIF3_p135"/>
    <property type="match status" value="1"/>
</dbReference>
<dbReference type="Pfam" id="PF13424">
    <property type="entry name" value="TPR_12"/>
    <property type="match status" value="1"/>
</dbReference>
<dbReference type="SUPFAM" id="SSF103107">
    <property type="entry name" value="Hypothetical protein c14orf129, hspc210"/>
    <property type="match status" value="1"/>
</dbReference>
<dbReference type="SUPFAM" id="SSF48452">
    <property type="entry name" value="TPR-like"/>
    <property type="match status" value="2"/>
</dbReference>
<dbReference type="PROSITE" id="PS51823">
    <property type="entry name" value="CLU"/>
    <property type="match status" value="1"/>
</dbReference>
<reference key="1">
    <citation type="journal article" date="2005" name="Science">
        <title>The genome of the basidiomycetous yeast and human pathogen Cryptococcus neoformans.</title>
        <authorList>
            <person name="Loftus B.J."/>
            <person name="Fung E."/>
            <person name="Roncaglia P."/>
            <person name="Rowley D."/>
            <person name="Amedeo P."/>
            <person name="Bruno D."/>
            <person name="Vamathevan J."/>
            <person name="Miranda M."/>
            <person name="Anderson I.J."/>
            <person name="Fraser J.A."/>
            <person name="Allen J.E."/>
            <person name="Bosdet I.E."/>
            <person name="Brent M.R."/>
            <person name="Chiu R."/>
            <person name="Doering T.L."/>
            <person name="Donlin M.J."/>
            <person name="D'Souza C.A."/>
            <person name="Fox D.S."/>
            <person name="Grinberg V."/>
            <person name="Fu J."/>
            <person name="Fukushima M."/>
            <person name="Haas B.J."/>
            <person name="Huang J.C."/>
            <person name="Janbon G."/>
            <person name="Jones S.J.M."/>
            <person name="Koo H.L."/>
            <person name="Krzywinski M.I."/>
            <person name="Kwon-Chung K.J."/>
            <person name="Lengeler K.B."/>
            <person name="Maiti R."/>
            <person name="Marra M.A."/>
            <person name="Marra R.E."/>
            <person name="Mathewson C.A."/>
            <person name="Mitchell T.G."/>
            <person name="Pertea M."/>
            <person name="Riggs F.R."/>
            <person name="Salzberg S.L."/>
            <person name="Schein J.E."/>
            <person name="Shvartsbeyn A."/>
            <person name="Shin H."/>
            <person name="Shumway M."/>
            <person name="Specht C.A."/>
            <person name="Suh B.B."/>
            <person name="Tenney A."/>
            <person name="Utterback T.R."/>
            <person name="Wickes B.L."/>
            <person name="Wortman J.R."/>
            <person name="Wye N.H."/>
            <person name="Kronstad J.W."/>
            <person name="Lodge J.K."/>
            <person name="Heitman J."/>
            <person name="Davis R.W."/>
            <person name="Fraser C.M."/>
            <person name="Hyman R.W."/>
        </authorList>
    </citation>
    <scope>NUCLEOTIDE SEQUENCE [LARGE SCALE GENOMIC DNA]</scope>
    <source>
        <strain>JEC21 / ATCC MYA-565</strain>
    </source>
</reference>